<feature type="chain" id="PRO_1000128592" description="Small ribosomal subunit protein uS14">
    <location>
        <begin position="1"/>
        <end position="101"/>
    </location>
</feature>
<name>RS14_RUEPO</name>
<gene>
    <name evidence="1" type="primary">rpsN</name>
    <name type="ordered locus">SPO0498</name>
</gene>
<comment type="function">
    <text evidence="1">Binds 16S rRNA, required for the assembly of 30S particles and may also be responsible for determining the conformation of the 16S rRNA at the A site.</text>
</comment>
<comment type="subunit">
    <text evidence="1">Part of the 30S ribosomal subunit. Contacts proteins S3 and S10.</text>
</comment>
<comment type="similarity">
    <text evidence="1">Belongs to the universal ribosomal protein uS14 family.</text>
</comment>
<proteinExistence type="inferred from homology"/>
<reference key="1">
    <citation type="journal article" date="2004" name="Nature">
        <title>Genome sequence of Silicibacter pomeroyi reveals adaptations to the marine environment.</title>
        <authorList>
            <person name="Moran M.A."/>
            <person name="Buchan A."/>
            <person name="Gonzalez J.M."/>
            <person name="Heidelberg J.F."/>
            <person name="Whitman W.B."/>
            <person name="Kiene R.P."/>
            <person name="Henriksen J.R."/>
            <person name="King G.M."/>
            <person name="Belas R."/>
            <person name="Fuqua C."/>
            <person name="Brinkac L.M."/>
            <person name="Lewis M."/>
            <person name="Johri S."/>
            <person name="Weaver B."/>
            <person name="Pai G."/>
            <person name="Eisen J.A."/>
            <person name="Rahe E."/>
            <person name="Sheldon W.M."/>
            <person name="Ye W."/>
            <person name="Miller T.R."/>
            <person name="Carlton J."/>
            <person name="Rasko D.A."/>
            <person name="Paulsen I.T."/>
            <person name="Ren Q."/>
            <person name="Daugherty S.C."/>
            <person name="DeBoy R.T."/>
            <person name="Dodson R.J."/>
            <person name="Durkin A.S."/>
            <person name="Madupu R."/>
            <person name="Nelson W.C."/>
            <person name="Sullivan S.A."/>
            <person name="Rosovitz M.J."/>
            <person name="Haft D.H."/>
            <person name="Selengut J."/>
            <person name="Ward N."/>
        </authorList>
    </citation>
    <scope>NUCLEOTIDE SEQUENCE [LARGE SCALE GENOMIC DNA]</scope>
    <source>
        <strain>ATCC 700808 / DSM 15171 / DSS-3</strain>
    </source>
</reference>
<reference key="2">
    <citation type="journal article" date="2014" name="Stand. Genomic Sci.">
        <title>An updated genome annotation for the model marine bacterium Ruegeria pomeroyi DSS-3.</title>
        <authorList>
            <person name="Rivers A.R."/>
            <person name="Smith C.B."/>
            <person name="Moran M.A."/>
        </authorList>
    </citation>
    <scope>GENOME REANNOTATION</scope>
    <source>
        <strain>ATCC 700808 / DSM 15171 / DSS-3</strain>
    </source>
</reference>
<sequence>MAKKSMIEREKKRERLVAQYAAKRAELKEIANDESRPMEERFKARLKLAKLPRNSSATRLHNRCQLTGRPHAYYRKLKVSRIMLRELGSAGQIPGMVKSSW</sequence>
<protein>
    <recommendedName>
        <fullName evidence="1">Small ribosomal subunit protein uS14</fullName>
    </recommendedName>
    <alternativeName>
        <fullName evidence="2">30S ribosomal protein S14</fullName>
    </alternativeName>
</protein>
<dbReference type="EMBL" id="CP000031">
    <property type="protein sequence ID" value="AAV93815.1"/>
    <property type="molecule type" value="Genomic_DNA"/>
</dbReference>
<dbReference type="RefSeq" id="WP_011046257.1">
    <property type="nucleotide sequence ID" value="NC_003911.12"/>
</dbReference>
<dbReference type="SMR" id="Q5LW45"/>
<dbReference type="STRING" id="246200.SPO0498"/>
<dbReference type="PaxDb" id="246200-SPO0498"/>
<dbReference type="KEGG" id="sil:SPO0498"/>
<dbReference type="eggNOG" id="COG0199">
    <property type="taxonomic scope" value="Bacteria"/>
</dbReference>
<dbReference type="HOGENOM" id="CLU_139869_0_1_5"/>
<dbReference type="OrthoDB" id="9810484at2"/>
<dbReference type="Proteomes" id="UP000001023">
    <property type="component" value="Chromosome"/>
</dbReference>
<dbReference type="GO" id="GO:0005737">
    <property type="term" value="C:cytoplasm"/>
    <property type="evidence" value="ECO:0007669"/>
    <property type="project" value="UniProtKB-ARBA"/>
</dbReference>
<dbReference type="GO" id="GO:0015935">
    <property type="term" value="C:small ribosomal subunit"/>
    <property type="evidence" value="ECO:0007669"/>
    <property type="project" value="TreeGrafter"/>
</dbReference>
<dbReference type="GO" id="GO:0019843">
    <property type="term" value="F:rRNA binding"/>
    <property type="evidence" value="ECO:0007669"/>
    <property type="project" value="UniProtKB-UniRule"/>
</dbReference>
<dbReference type="GO" id="GO:0003735">
    <property type="term" value="F:structural constituent of ribosome"/>
    <property type="evidence" value="ECO:0007669"/>
    <property type="project" value="InterPro"/>
</dbReference>
<dbReference type="GO" id="GO:0006412">
    <property type="term" value="P:translation"/>
    <property type="evidence" value="ECO:0007669"/>
    <property type="project" value="UniProtKB-UniRule"/>
</dbReference>
<dbReference type="FunFam" id="1.10.287.1480:FF:000001">
    <property type="entry name" value="30S ribosomal protein S14"/>
    <property type="match status" value="1"/>
</dbReference>
<dbReference type="Gene3D" id="1.10.287.1480">
    <property type="match status" value="1"/>
</dbReference>
<dbReference type="HAMAP" id="MF_00537">
    <property type="entry name" value="Ribosomal_uS14_1"/>
    <property type="match status" value="1"/>
</dbReference>
<dbReference type="InterPro" id="IPR001209">
    <property type="entry name" value="Ribosomal_uS14"/>
</dbReference>
<dbReference type="InterPro" id="IPR023036">
    <property type="entry name" value="Ribosomal_uS14_bac/plastid"/>
</dbReference>
<dbReference type="InterPro" id="IPR018271">
    <property type="entry name" value="Ribosomal_uS14_CS"/>
</dbReference>
<dbReference type="NCBIfam" id="NF006477">
    <property type="entry name" value="PRK08881.1"/>
    <property type="match status" value="1"/>
</dbReference>
<dbReference type="PANTHER" id="PTHR19836">
    <property type="entry name" value="30S RIBOSOMAL PROTEIN S14"/>
    <property type="match status" value="1"/>
</dbReference>
<dbReference type="PANTHER" id="PTHR19836:SF19">
    <property type="entry name" value="SMALL RIBOSOMAL SUBUNIT PROTEIN US14M"/>
    <property type="match status" value="1"/>
</dbReference>
<dbReference type="Pfam" id="PF00253">
    <property type="entry name" value="Ribosomal_S14"/>
    <property type="match status" value="1"/>
</dbReference>
<dbReference type="SUPFAM" id="SSF57716">
    <property type="entry name" value="Glucocorticoid receptor-like (DNA-binding domain)"/>
    <property type="match status" value="1"/>
</dbReference>
<dbReference type="PROSITE" id="PS00527">
    <property type="entry name" value="RIBOSOMAL_S14"/>
    <property type="match status" value="1"/>
</dbReference>
<accession>Q5LW45</accession>
<evidence type="ECO:0000255" key="1">
    <source>
        <dbReference type="HAMAP-Rule" id="MF_00537"/>
    </source>
</evidence>
<evidence type="ECO:0000305" key="2"/>
<keyword id="KW-1185">Reference proteome</keyword>
<keyword id="KW-0687">Ribonucleoprotein</keyword>
<keyword id="KW-0689">Ribosomal protein</keyword>
<keyword id="KW-0694">RNA-binding</keyword>
<keyword id="KW-0699">rRNA-binding</keyword>
<organism>
    <name type="scientific">Ruegeria pomeroyi (strain ATCC 700808 / DSM 15171 / DSS-3)</name>
    <name type="common">Silicibacter pomeroyi</name>
    <dbReference type="NCBI Taxonomy" id="246200"/>
    <lineage>
        <taxon>Bacteria</taxon>
        <taxon>Pseudomonadati</taxon>
        <taxon>Pseudomonadota</taxon>
        <taxon>Alphaproteobacteria</taxon>
        <taxon>Rhodobacterales</taxon>
        <taxon>Roseobacteraceae</taxon>
        <taxon>Ruegeria</taxon>
    </lineage>
</organism>